<comment type="subcellular location">
    <subcellularLocation>
        <location evidence="1">Cell inner membrane</location>
        <topology evidence="1">Multi-pass membrane protein</topology>
    </subcellularLocation>
</comment>
<comment type="similarity">
    <text evidence="1">Belongs to the UPF0299 family.</text>
</comment>
<sequence>MSKTLNIIWQYLRAFVLIYACLYAGIFIASLLPVTIPGSIIGMLILFVLLALQILPAKWVNPGCYVLIRYMALLFVPIGVGVMQYFDLLRAQFGPVVVSCAVSTLVVFLVVSWSSQLVHGERKVVGQKGSEE</sequence>
<dbReference type="EMBL" id="CP000802">
    <property type="protein sequence ID" value="ABV06557.1"/>
    <property type="molecule type" value="Genomic_DNA"/>
</dbReference>
<dbReference type="RefSeq" id="WP_001295452.1">
    <property type="nucleotide sequence ID" value="NC_009800.1"/>
</dbReference>
<dbReference type="SMR" id="A8A203"/>
<dbReference type="KEGG" id="ecx:EcHS_A2275"/>
<dbReference type="HOGENOM" id="CLU_113736_1_1_6"/>
<dbReference type="GO" id="GO:0005886">
    <property type="term" value="C:plasma membrane"/>
    <property type="evidence" value="ECO:0007669"/>
    <property type="project" value="UniProtKB-SubCell"/>
</dbReference>
<dbReference type="HAMAP" id="MF_01144">
    <property type="entry name" value="UPF0299"/>
    <property type="match status" value="1"/>
</dbReference>
<dbReference type="InterPro" id="IPR005538">
    <property type="entry name" value="LrgA/CidA"/>
</dbReference>
<dbReference type="InterPro" id="IPR022957">
    <property type="entry name" value="Uncharacterised_UPF0299"/>
</dbReference>
<dbReference type="NCBIfam" id="NF002494">
    <property type="entry name" value="PRK01821.1"/>
    <property type="match status" value="1"/>
</dbReference>
<dbReference type="PANTHER" id="PTHR33931">
    <property type="entry name" value="HOLIN-LIKE PROTEIN CIDA-RELATED"/>
    <property type="match status" value="1"/>
</dbReference>
<dbReference type="PANTHER" id="PTHR33931:SF5">
    <property type="entry name" value="UPF0299 MEMBRANE PROTEIN YOHJ"/>
    <property type="match status" value="1"/>
</dbReference>
<dbReference type="Pfam" id="PF03788">
    <property type="entry name" value="LrgA"/>
    <property type="match status" value="1"/>
</dbReference>
<accession>A8A203</accession>
<reference key="1">
    <citation type="journal article" date="2008" name="J. Bacteriol.">
        <title>The pangenome structure of Escherichia coli: comparative genomic analysis of E. coli commensal and pathogenic isolates.</title>
        <authorList>
            <person name="Rasko D.A."/>
            <person name="Rosovitz M.J."/>
            <person name="Myers G.S.A."/>
            <person name="Mongodin E.F."/>
            <person name="Fricke W.F."/>
            <person name="Gajer P."/>
            <person name="Crabtree J."/>
            <person name="Sebaihia M."/>
            <person name="Thomson N.R."/>
            <person name="Chaudhuri R."/>
            <person name="Henderson I.R."/>
            <person name="Sperandio V."/>
            <person name="Ravel J."/>
        </authorList>
    </citation>
    <scope>NUCLEOTIDE SEQUENCE [LARGE SCALE GENOMIC DNA]</scope>
    <source>
        <strain>HS</strain>
    </source>
</reference>
<evidence type="ECO:0000255" key="1">
    <source>
        <dbReference type="HAMAP-Rule" id="MF_01144"/>
    </source>
</evidence>
<name>YOHJ_ECOHS</name>
<keyword id="KW-0997">Cell inner membrane</keyword>
<keyword id="KW-1003">Cell membrane</keyword>
<keyword id="KW-0472">Membrane</keyword>
<keyword id="KW-0812">Transmembrane</keyword>
<keyword id="KW-1133">Transmembrane helix</keyword>
<protein>
    <recommendedName>
        <fullName evidence="1">UPF0299 membrane protein YohJ</fullName>
    </recommendedName>
</protein>
<organism>
    <name type="scientific">Escherichia coli O9:H4 (strain HS)</name>
    <dbReference type="NCBI Taxonomy" id="331112"/>
    <lineage>
        <taxon>Bacteria</taxon>
        <taxon>Pseudomonadati</taxon>
        <taxon>Pseudomonadota</taxon>
        <taxon>Gammaproteobacteria</taxon>
        <taxon>Enterobacterales</taxon>
        <taxon>Enterobacteriaceae</taxon>
        <taxon>Escherichia</taxon>
    </lineage>
</organism>
<proteinExistence type="inferred from homology"/>
<feature type="chain" id="PRO_1000065454" description="UPF0299 membrane protein YohJ">
    <location>
        <begin position="1"/>
        <end position="132"/>
    </location>
</feature>
<feature type="transmembrane region" description="Helical" evidence="1">
    <location>
        <begin position="7"/>
        <end position="27"/>
    </location>
</feature>
<feature type="transmembrane region" description="Helical" evidence="1">
    <location>
        <begin position="31"/>
        <end position="51"/>
    </location>
</feature>
<feature type="transmembrane region" description="Helical" evidence="1">
    <location>
        <begin position="63"/>
        <end position="83"/>
    </location>
</feature>
<feature type="transmembrane region" description="Helical" evidence="1">
    <location>
        <begin position="93"/>
        <end position="113"/>
    </location>
</feature>
<gene>
    <name evidence="1" type="primary">yohJ</name>
    <name type="ordered locus">EcHS_A2275</name>
</gene>